<reference key="1">
    <citation type="journal article" date="2007" name="Science">
        <title>The Fusarium graminearum genome reveals a link between localized polymorphism and pathogen specialization.</title>
        <authorList>
            <person name="Cuomo C.A."/>
            <person name="Gueldener U."/>
            <person name="Xu J.-R."/>
            <person name="Trail F."/>
            <person name="Turgeon B.G."/>
            <person name="Di Pietro A."/>
            <person name="Walton J.D."/>
            <person name="Ma L.-J."/>
            <person name="Baker S.E."/>
            <person name="Rep M."/>
            <person name="Adam G."/>
            <person name="Antoniw J."/>
            <person name="Baldwin T."/>
            <person name="Calvo S.E."/>
            <person name="Chang Y.-L."/>
            <person name="DeCaprio D."/>
            <person name="Gale L.R."/>
            <person name="Gnerre S."/>
            <person name="Goswami R.S."/>
            <person name="Hammond-Kosack K."/>
            <person name="Harris L.J."/>
            <person name="Hilburn K."/>
            <person name="Kennell J.C."/>
            <person name="Kroken S."/>
            <person name="Magnuson J.K."/>
            <person name="Mannhaupt G."/>
            <person name="Mauceli E.W."/>
            <person name="Mewes H.-W."/>
            <person name="Mitterbauer R."/>
            <person name="Muehlbauer G."/>
            <person name="Muensterkoetter M."/>
            <person name="Nelson D."/>
            <person name="O'Donnell K."/>
            <person name="Ouellet T."/>
            <person name="Qi W."/>
            <person name="Quesneville H."/>
            <person name="Roncero M.I.G."/>
            <person name="Seong K.-Y."/>
            <person name="Tetko I.V."/>
            <person name="Urban M."/>
            <person name="Waalwijk C."/>
            <person name="Ward T.J."/>
            <person name="Yao J."/>
            <person name="Birren B.W."/>
            <person name="Kistler H.C."/>
        </authorList>
    </citation>
    <scope>NUCLEOTIDE SEQUENCE [LARGE SCALE GENOMIC DNA]</scope>
    <source>
        <strain>ATCC MYA-4620 / CBS 123657 / FGSC 9075 / NRRL 31084 / PH-1</strain>
    </source>
</reference>
<reference key="2">
    <citation type="journal article" date="2010" name="Nature">
        <title>Comparative genomics reveals mobile pathogenicity chromosomes in Fusarium.</title>
        <authorList>
            <person name="Ma L.-J."/>
            <person name="van der Does H.C."/>
            <person name="Borkovich K.A."/>
            <person name="Coleman J.J."/>
            <person name="Daboussi M.-J."/>
            <person name="Di Pietro A."/>
            <person name="Dufresne M."/>
            <person name="Freitag M."/>
            <person name="Grabherr M."/>
            <person name="Henrissat B."/>
            <person name="Houterman P.M."/>
            <person name="Kang S."/>
            <person name="Shim W.-B."/>
            <person name="Woloshuk C."/>
            <person name="Xie X."/>
            <person name="Xu J.-R."/>
            <person name="Antoniw J."/>
            <person name="Baker S.E."/>
            <person name="Bluhm B.H."/>
            <person name="Breakspear A."/>
            <person name="Brown D.W."/>
            <person name="Butchko R.A.E."/>
            <person name="Chapman S."/>
            <person name="Coulson R."/>
            <person name="Coutinho P.M."/>
            <person name="Danchin E.G.J."/>
            <person name="Diener A."/>
            <person name="Gale L.R."/>
            <person name="Gardiner D.M."/>
            <person name="Goff S."/>
            <person name="Hammond-Kosack K.E."/>
            <person name="Hilburn K."/>
            <person name="Hua-Van A."/>
            <person name="Jonkers W."/>
            <person name="Kazan K."/>
            <person name="Kodira C.D."/>
            <person name="Koehrsen M."/>
            <person name="Kumar L."/>
            <person name="Lee Y.-H."/>
            <person name="Li L."/>
            <person name="Manners J.M."/>
            <person name="Miranda-Saavedra D."/>
            <person name="Mukherjee M."/>
            <person name="Park G."/>
            <person name="Park J."/>
            <person name="Park S.-Y."/>
            <person name="Proctor R.H."/>
            <person name="Regev A."/>
            <person name="Ruiz-Roldan M.C."/>
            <person name="Sain D."/>
            <person name="Sakthikumar S."/>
            <person name="Sykes S."/>
            <person name="Schwartz D.C."/>
            <person name="Turgeon B.G."/>
            <person name="Wapinski I."/>
            <person name="Yoder O."/>
            <person name="Young S."/>
            <person name="Zeng Q."/>
            <person name="Zhou S."/>
            <person name="Galagan J."/>
            <person name="Cuomo C.A."/>
            <person name="Kistler H.C."/>
            <person name="Rep M."/>
        </authorList>
    </citation>
    <scope>GENOME REANNOTATION</scope>
    <source>
        <strain>ATCC MYA-4620 / CBS 123657 / FGSC 9075 / NRRL 31084 / PH-1</strain>
    </source>
</reference>
<reference key="3">
    <citation type="journal article" date="2015" name="BMC Genomics">
        <title>The completed genome sequence of the pathogenic ascomycete fungus Fusarium graminearum.</title>
        <authorList>
            <person name="King R."/>
            <person name="Urban M."/>
            <person name="Hammond-Kosack M.C.U."/>
            <person name="Hassani-Pak K."/>
            <person name="Hammond-Kosack K.E."/>
        </authorList>
    </citation>
    <scope>NUCLEOTIDE SEQUENCE [LARGE SCALE GENOMIC DNA]</scope>
    <source>
        <strain>ATCC MYA-4620 / CBS 123657 / FGSC 9075 / NRRL 31084 / PH-1</strain>
    </source>
</reference>
<proteinExistence type="inferred from homology"/>
<evidence type="ECO:0000250" key="1"/>
<evidence type="ECO:0000305" key="2"/>
<gene>
    <name type="primary">RVB2</name>
    <name type="ORF">FGRAMPH1_01T19889</name>
    <name type="ORF">FGRRES_06260</name>
    <name type="ORF">FGSG_06260</name>
</gene>
<dbReference type="EC" id="3.6.4.12"/>
<dbReference type="EMBL" id="DS231665">
    <property type="protein sequence ID" value="ESU12334.1"/>
    <property type="molecule type" value="Genomic_DNA"/>
</dbReference>
<dbReference type="EMBL" id="HG970334">
    <property type="protein sequence ID" value="SCB64895.1"/>
    <property type="molecule type" value="Genomic_DNA"/>
</dbReference>
<dbReference type="RefSeq" id="XP_011324910.1">
    <property type="nucleotide sequence ID" value="XM_011326608.1"/>
</dbReference>
<dbReference type="SMR" id="Q4I948"/>
<dbReference type="FunCoup" id="Q4I948">
    <property type="interactions" value="1432"/>
</dbReference>
<dbReference type="STRING" id="229533.Q4I948"/>
<dbReference type="GeneID" id="23553396"/>
<dbReference type="KEGG" id="fgr:FGSG_06260"/>
<dbReference type="VEuPathDB" id="FungiDB:FGRAMPH1_01G19889"/>
<dbReference type="eggNOG" id="KOG2680">
    <property type="taxonomic scope" value="Eukaryota"/>
</dbReference>
<dbReference type="HOGENOM" id="CLU_028311_4_0_1"/>
<dbReference type="InParanoid" id="Q4I948"/>
<dbReference type="OrthoDB" id="82920at110618"/>
<dbReference type="Proteomes" id="UP000070720">
    <property type="component" value="Chromosome 3"/>
</dbReference>
<dbReference type="GO" id="GO:0005634">
    <property type="term" value="C:nucleus"/>
    <property type="evidence" value="ECO:0007669"/>
    <property type="project" value="UniProtKB-SubCell"/>
</dbReference>
<dbReference type="GO" id="GO:0005524">
    <property type="term" value="F:ATP binding"/>
    <property type="evidence" value="ECO:0007669"/>
    <property type="project" value="UniProtKB-KW"/>
</dbReference>
<dbReference type="GO" id="GO:0016887">
    <property type="term" value="F:ATP hydrolysis activity"/>
    <property type="evidence" value="ECO:0007669"/>
    <property type="project" value="InterPro"/>
</dbReference>
<dbReference type="GO" id="GO:0008094">
    <property type="term" value="F:ATP-dependent activity, acting on DNA"/>
    <property type="evidence" value="ECO:0007669"/>
    <property type="project" value="InterPro"/>
</dbReference>
<dbReference type="GO" id="GO:0004386">
    <property type="term" value="F:helicase activity"/>
    <property type="evidence" value="ECO:0007669"/>
    <property type="project" value="UniProtKB-KW"/>
</dbReference>
<dbReference type="GO" id="GO:0006325">
    <property type="term" value="P:chromatin organization"/>
    <property type="evidence" value="ECO:0007669"/>
    <property type="project" value="UniProtKB-KW"/>
</dbReference>
<dbReference type="GO" id="GO:0006281">
    <property type="term" value="P:DNA repair"/>
    <property type="evidence" value="ECO:0007669"/>
    <property type="project" value="UniProtKB-KW"/>
</dbReference>
<dbReference type="GO" id="GO:0006364">
    <property type="term" value="P:rRNA processing"/>
    <property type="evidence" value="ECO:0007669"/>
    <property type="project" value="UniProtKB-KW"/>
</dbReference>
<dbReference type="FunFam" id="3.40.50.300:FF:002221">
    <property type="entry name" value="RuvB-like 2"/>
    <property type="match status" value="2"/>
</dbReference>
<dbReference type="FunFam" id="1.10.8.60:FF:000010">
    <property type="entry name" value="RuvB-like helicase"/>
    <property type="match status" value="1"/>
</dbReference>
<dbReference type="FunFam" id="2.40.50.360:FF:000002">
    <property type="entry name" value="RuvB-like helicase"/>
    <property type="match status" value="1"/>
</dbReference>
<dbReference type="Gene3D" id="1.10.8.60">
    <property type="match status" value="1"/>
</dbReference>
<dbReference type="Gene3D" id="3.40.50.300">
    <property type="entry name" value="P-loop containing nucleotide triphosphate hydrolases"/>
    <property type="match status" value="1"/>
</dbReference>
<dbReference type="Gene3D" id="2.40.50.360">
    <property type="entry name" value="RuvB-like helicase, domain II"/>
    <property type="match status" value="1"/>
</dbReference>
<dbReference type="InterPro" id="IPR003593">
    <property type="entry name" value="AAA+_ATPase"/>
</dbReference>
<dbReference type="InterPro" id="IPR027417">
    <property type="entry name" value="P-loop_NTPase"/>
</dbReference>
<dbReference type="InterPro" id="IPR027238">
    <property type="entry name" value="RuvB-like"/>
</dbReference>
<dbReference type="InterPro" id="IPR041048">
    <property type="entry name" value="RuvB-like_C"/>
</dbReference>
<dbReference type="InterPro" id="IPR042487">
    <property type="entry name" value="RuvBL1/2_DNA/RNA_bd_dom"/>
</dbReference>
<dbReference type="InterPro" id="IPR010339">
    <property type="entry name" value="TIP49_P-loop"/>
</dbReference>
<dbReference type="PANTHER" id="PTHR11093">
    <property type="entry name" value="RUVB-RELATED REPTIN AND PONTIN"/>
    <property type="match status" value="1"/>
</dbReference>
<dbReference type="Pfam" id="PF06068">
    <property type="entry name" value="TIP49"/>
    <property type="match status" value="1"/>
</dbReference>
<dbReference type="Pfam" id="PF17856">
    <property type="entry name" value="TIP49_C"/>
    <property type="match status" value="1"/>
</dbReference>
<dbReference type="SMART" id="SM00382">
    <property type="entry name" value="AAA"/>
    <property type="match status" value="1"/>
</dbReference>
<dbReference type="SUPFAM" id="SSF52540">
    <property type="entry name" value="P-loop containing nucleoside triphosphate hydrolases"/>
    <property type="match status" value="1"/>
</dbReference>
<organism>
    <name type="scientific">Gibberella zeae (strain ATCC MYA-4620 / CBS 123657 / FGSC 9075 / NRRL 31084 / PH-1)</name>
    <name type="common">Wheat head blight fungus</name>
    <name type="synonym">Fusarium graminearum</name>
    <dbReference type="NCBI Taxonomy" id="229533"/>
    <lineage>
        <taxon>Eukaryota</taxon>
        <taxon>Fungi</taxon>
        <taxon>Dikarya</taxon>
        <taxon>Ascomycota</taxon>
        <taxon>Pezizomycotina</taxon>
        <taxon>Sordariomycetes</taxon>
        <taxon>Hypocreomycetidae</taxon>
        <taxon>Hypocreales</taxon>
        <taxon>Nectriaceae</taxon>
        <taxon>Fusarium</taxon>
    </lineage>
</organism>
<accession>Q4I948</accession>
<accession>A0A098E1L2</accession>
<accession>A0A0E0SKN5</accession>
<accession>A0A1C3YK40</accession>
<accession>I1RQB9</accession>
<accession>V6RDK9</accession>
<comment type="function">
    <text evidence="1">DNA helicase which participates in several chromatin remodeling complexes, including the SWR1 and the INO80 complexes. The SWR1 complex mediates the ATP-dependent exchange of histone H2A for the H2A variant HZT1 leading to transcriptional regulation of selected genes by chromatin remodeling. The INO80 complex remodels chromatin by shifting nucleosomes and is involved in DNA repair. Also involved in pre-rRNA processing (By similarity).</text>
</comment>
<comment type="catalytic activity">
    <reaction>
        <text>ATP + H2O = ADP + phosphate + H(+)</text>
        <dbReference type="Rhea" id="RHEA:13065"/>
        <dbReference type="ChEBI" id="CHEBI:15377"/>
        <dbReference type="ChEBI" id="CHEBI:15378"/>
        <dbReference type="ChEBI" id="CHEBI:30616"/>
        <dbReference type="ChEBI" id="CHEBI:43474"/>
        <dbReference type="ChEBI" id="CHEBI:456216"/>
        <dbReference type="EC" id="3.6.4.12"/>
    </reaction>
</comment>
<comment type="subunit">
    <text evidence="1">May form heterododecamers with RVB1. Component of the SWR1 chromatin remodeling complex, the INO80 chromatin remodeling complex, and of the R2TP complex (By similarity).</text>
</comment>
<comment type="subcellular location">
    <subcellularLocation>
        <location evidence="1">Nucleus</location>
    </subcellularLocation>
</comment>
<comment type="similarity">
    <text evidence="2">Belongs to the RuvB family.</text>
</comment>
<feature type="chain" id="PRO_0000165669" description="RuvB-like helicase 2">
    <location>
        <begin position="1"/>
        <end position="473"/>
    </location>
</feature>
<feature type="binding site" evidence="1">
    <location>
        <begin position="76"/>
        <end position="83"/>
    </location>
    <ligand>
        <name>ATP</name>
        <dbReference type="ChEBI" id="CHEBI:30616"/>
    </ligand>
</feature>
<name>RUVB2_GIBZE</name>
<keyword id="KW-0010">Activator</keyword>
<keyword id="KW-0067">ATP-binding</keyword>
<keyword id="KW-0156">Chromatin regulator</keyword>
<keyword id="KW-0227">DNA damage</keyword>
<keyword id="KW-0234">DNA repair</keyword>
<keyword id="KW-0347">Helicase</keyword>
<keyword id="KW-0378">Hydrolase</keyword>
<keyword id="KW-0547">Nucleotide-binding</keyword>
<keyword id="KW-0539">Nucleus</keyword>
<keyword id="KW-1185">Reference proteome</keyword>
<keyword id="KW-0698">rRNA processing</keyword>
<keyword id="KW-0804">Transcription</keyword>
<keyword id="KW-0805">Transcription regulation</keyword>
<protein>
    <recommendedName>
        <fullName>RuvB-like helicase 2</fullName>
        <ecNumber>3.6.4.12</ecNumber>
    </recommendedName>
</protein>
<sequence>MAAPVMTVSDSKDLRGLNLIAAHSHIRGLGVDATTLEPRASSQGLVGQEKARKAAAVMLQMIKEGKIAGRAVLIAGPPSTGKTAIAMGMAQSLGPDVPFTTLASSEIFSLEMSKTEALTQAFRKSIGVRIKEESEIMEGEVVEIQIDRSVTGSAKQGKLTIKTTDMEAVYDMGSKMIDAMTKERVMAGDIISIDKSSGKITKLGRSYARSRDYDAMGVDTKFLQCPDGELQKRKEVVHTVTLHEIDVINSRTQGFLALFSGDTGEIRSEIRDQINTKVGEWKEEGKAEIVPGVLFIDEVHMLDIECFSYINRALEDDLAPVVIMASNRGNSRIRGTDYRSPHGLPLDFLDRVAIINTHSYTPEEIKQIISIRAQEEEVDVHPDALALLTKIGQEAGLRYASNLITTSQLVSAKRKAKQVEVSDVQRSFQLFYDPARSIKFVAESEKRLIGNTGAVDFSVGAAVSNGEEKMDLS</sequence>